<sequence length="97" mass="10571">MARSLFKAKLLLAPVADGISLSISRRGYAAAAPLGTISRTGIMEKNDLRPAVREDSGASSAWAPDPITGYYRPENRAVEIDPAELREMLLNHKVRAH</sequence>
<protein>
    <recommendedName>
        <fullName>Late embryogenesis abundant protein Lea5</fullName>
    </recommendedName>
</protein>
<proteinExistence type="evidence at transcript level"/>
<feature type="chain" id="PRO_0000221237" description="Late embryogenesis abundant protein Lea5">
    <location>
        <begin position="1"/>
        <end position="97"/>
    </location>
</feature>
<name>LEA5_CITSI</name>
<comment type="induction">
    <text evidence="1">By salt, drought and heat stress.</text>
</comment>
<comment type="similarity">
    <text evidence="2">Belongs to the LEA type 3 family.</text>
</comment>
<gene>
    <name type="primary">LEA5</name>
</gene>
<accession>Q39644</accession>
<evidence type="ECO:0000269" key="1">
    <source>
    </source>
</evidence>
<evidence type="ECO:0000305" key="2"/>
<organism>
    <name type="scientific">Citrus sinensis</name>
    <name type="common">Sweet orange</name>
    <name type="synonym">Citrus aurantium var. sinensis</name>
    <dbReference type="NCBI Taxonomy" id="2711"/>
    <lineage>
        <taxon>Eukaryota</taxon>
        <taxon>Viridiplantae</taxon>
        <taxon>Streptophyta</taxon>
        <taxon>Embryophyta</taxon>
        <taxon>Tracheophyta</taxon>
        <taxon>Spermatophyta</taxon>
        <taxon>Magnoliopsida</taxon>
        <taxon>eudicotyledons</taxon>
        <taxon>Gunneridae</taxon>
        <taxon>Pentapetalae</taxon>
        <taxon>rosids</taxon>
        <taxon>malvids</taxon>
        <taxon>Sapindales</taxon>
        <taxon>Rutaceae</taxon>
        <taxon>Aurantioideae</taxon>
        <taxon>Citrus</taxon>
    </lineage>
</organism>
<keyword id="KW-0346">Stress response</keyword>
<reference key="1">
    <citation type="submission" date="1994-11" db="EMBL/GenBank/DDBJ databases">
        <authorList>
            <person name="Holland D.D."/>
        </authorList>
    </citation>
    <scope>NUCLEOTIDE SEQUENCE [MRNA]</scope>
</reference>
<reference key="2">
    <citation type="journal article" date="1995" name="Plant Mol. Biol.">
        <title>Drought, heat and salt stress induce the expression of a citrus homologue of an atypical late-embryogenesis Lea5 gene.</title>
        <authorList>
            <person name="Naot D."/>
            <person name="Ben-Hayyim G."/>
            <person name="Eshdat Y."/>
            <person name="Holland D."/>
        </authorList>
    </citation>
    <scope>INDUCTION</scope>
</reference>
<dbReference type="EMBL" id="Z46824">
    <property type="protein sequence ID" value="CAA86851.1"/>
    <property type="molecule type" value="mRNA"/>
</dbReference>
<dbReference type="PIR" id="S53501">
    <property type="entry name" value="S53501"/>
</dbReference>
<dbReference type="RefSeq" id="NP_001276069.1">
    <property type="nucleotide sequence ID" value="NM_001289140.1"/>
</dbReference>
<dbReference type="PaxDb" id="2711-XP_006489054.1"/>
<dbReference type="GeneID" id="102610022"/>
<dbReference type="KEGG" id="cit:102610022"/>
<dbReference type="eggNOG" id="ENOG502S70H">
    <property type="taxonomic scope" value="Eukaryota"/>
</dbReference>
<dbReference type="OrthoDB" id="885520at71240"/>
<dbReference type="InterPro" id="IPR004926">
    <property type="entry name" value="LEA_3a"/>
</dbReference>
<dbReference type="PANTHER" id="PTHR33509">
    <property type="entry name" value="LATE EMBRYOGENIS ABUNDANT PROTEIN 2-RELATED"/>
    <property type="match status" value="1"/>
</dbReference>
<dbReference type="PANTHER" id="PTHR33509:SF34">
    <property type="entry name" value="LATE EMBRYOGENIS ABUNDANT PROTEIN 41"/>
    <property type="match status" value="1"/>
</dbReference>
<dbReference type="Pfam" id="PF03242">
    <property type="entry name" value="LEA_3a"/>
    <property type="match status" value="1"/>
</dbReference>